<keyword id="KW-0028">Amino-acid biosynthesis</keyword>
<keyword id="KW-0378">Hydrolase</keyword>
<keyword id="KW-0460">Magnesium</keyword>
<keyword id="KW-0479">Metal-binding</keyword>
<keyword id="KW-0486">Methionine biosynthesis</keyword>
<comment type="function">
    <text evidence="1">Bifunctional enzyme that catalyzes the enolization of 2,3-diketo-5-methylthiopentyl-1-phosphate (DK-MTP-1-P) into the intermediate 2-hydroxy-3-keto-5-methylthiopentenyl-1-phosphate (HK-MTPenyl-1-P), which is then dephosphorylated to form the acireductone 1,2-dihydroxy-3-keto-5-methylthiopentene (DHK-MTPene).</text>
</comment>
<comment type="catalytic activity">
    <reaction evidence="1">
        <text>5-methylsulfanyl-2,3-dioxopentyl phosphate + H2O = 1,2-dihydroxy-5-(methylsulfanyl)pent-1-en-3-one + phosphate</text>
        <dbReference type="Rhea" id="RHEA:21700"/>
        <dbReference type="ChEBI" id="CHEBI:15377"/>
        <dbReference type="ChEBI" id="CHEBI:43474"/>
        <dbReference type="ChEBI" id="CHEBI:49252"/>
        <dbReference type="ChEBI" id="CHEBI:58828"/>
        <dbReference type="EC" id="3.1.3.77"/>
    </reaction>
</comment>
<comment type="cofactor">
    <cofactor evidence="1">
        <name>Mg(2+)</name>
        <dbReference type="ChEBI" id="CHEBI:18420"/>
    </cofactor>
    <text evidence="1">Binds 1 Mg(2+) ion per subunit.</text>
</comment>
<comment type="pathway">
    <text evidence="1">Amino-acid biosynthesis; L-methionine biosynthesis via salvage pathway; L-methionine from S-methyl-5-thio-alpha-D-ribose 1-phosphate: step 3/6.</text>
</comment>
<comment type="pathway">
    <text evidence="1">Amino-acid biosynthesis; L-methionine biosynthesis via salvage pathway; L-methionine from S-methyl-5-thio-alpha-D-ribose 1-phosphate: step 4/6.</text>
</comment>
<comment type="subunit">
    <text evidence="1">Monomer.</text>
</comment>
<comment type="similarity">
    <text evidence="1">Belongs to the HAD-like hydrolase superfamily. MasA/MtnC family.</text>
</comment>
<name>MTNC_XANE5</name>
<sequence length="232" mass="25905">MTRPQAILTDIEGTTSSISFVKDVLFPYARRAMPAYVREHGNHPQVRHWLNQVADEIGEDVPDEVLITTLQTWIDEDRKHTALKALQGLIWGDGYKTADFTAHIYADAAIQLKAWHAAGIPLYVYSSGSVPAQKLFFAHSDAGDLSGLITDWFDTEVGPKRESASYRRIAERIGVPGPEILFLSDVIEELDAAKRAGMRTALLDRREDYPTPRSADDVGSHQRVESFSQLVL</sequence>
<reference key="1">
    <citation type="journal article" date="2005" name="J. Bacteriol.">
        <title>Insights into genome plasticity and pathogenicity of the plant pathogenic Bacterium Xanthomonas campestris pv. vesicatoria revealed by the complete genome sequence.</title>
        <authorList>
            <person name="Thieme F."/>
            <person name="Koebnik R."/>
            <person name="Bekel T."/>
            <person name="Berger C."/>
            <person name="Boch J."/>
            <person name="Buettner D."/>
            <person name="Caldana C."/>
            <person name="Gaigalat L."/>
            <person name="Goesmann A."/>
            <person name="Kay S."/>
            <person name="Kirchner O."/>
            <person name="Lanz C."/>
            <person name="Linke B."/>
            <person name="McHardy A.C."/>
            <person name="Meyer F."/>
            <person name="Mittenhuber G."/>
            <person name="Nies D.H."/>
            <person name="Niesbach-Kloesgen U."/>
            <person name="Patschkowski T."/>
            <person name="Rueckert C."/>
            <person name="Rupp O."/>
            <person name="Schneiker S."/>
            <person name="Schuster S.C."/>
            <person name="Vorhoelter F.J."/>
            <person name="Weber E."/>
            <person name="Puehler A."/>
            <person name="Bonas U."/>
            <person name="Bartels D."/>
            <person name="Kaiser O."/>
        </authorList>
    </citation>
    <scope>NUCLEOTIDE SEQUENCE [LARGE SCALE GENOMIC DNA]</scope>
    <source>
        <strain>85-10</strain>
    </source>
</reference>
<accession>Q3BUE8</accession>
<proteinExistence type="inferred from homology"/>
<organism>
    <name type="scientific">Xanthomonas euvesicatoria pv. vesicatoria (strain 85-10)</name>
    <name type="common">Xanthomonas campestris pv. vesicatoria</name>
    <dbReference type="NCBI Taxonomy" id="316273"/>
    <lineage>
        <taxon>Bacteria</taxon>
        <taxon>Pseudomonadati</taxon>
        <taxon>Pseudomonadota</taxon>
        <taxon>Gammaproteobacteria</taxon>
        <taxon>Lysobacterales</taxon>
        <taxon>Lysobacteraceae</taxon>
        <taxon>Xanthomonas</taxon>
    </lineage>
</organism>
<feature type="chain" id="PRO_0000357431" description="Enolase-phosphatase E1">
    <location>
        <begin position="1"/>
        <end position="232"/>
    </location>
</feature>
<dbReference type="EC" id="3.1.3.77" evidence="1"/>
<dbReference type="EMBL" id="AM039952">
    <property type="protein sequence ID" value="CAJ23561.1"/>
    <property type="molecule type" value="Genomic_DNA"/>
</dbReference>
<dbReference type="RefSeq" id="WP_008571450.1">
    <property type="nucleotide sequence ID" value="NZ_CP017190.1"/>
</dbReference>
<dbReference type="SMR" id="Q3BUE8"/>
<dbReference type="STRING" id="456327.BJD11_13005"/>
<dbReference type="GeneID" id="63991109"/>
<dbReference type="KEGG" id="xcv:XCV1884"/>
<dbReference type="eggNOG" id="COG4229">
    <property type="taxonomic scope" value="Bacteria"/>
</dbReference>
<dbReference type="HOGENOM" id="CLU_023273_0_0_6"/>
<dbReference type="UniPathway" id="UPA00904">
    <property type="reaction ID" value="UER00876"/>
</dbReference>
<dbReference type="UniPathway" id="UPA00904">
    <property type="reaction ID" value="UER00877"/>
</dbReference>
<dbReference type="Proteomes" id="UP000007069">
    <property type="component" value="Chromosome"/>
</dbReference>
<dbReference type="GO" id="GO:0043715">
    <property type="term" value="F:2,3-diketo-5-methylthiopentyl-1-phosphate enolase activity"/>
    <property type="evidence" value="ECO:0007669"/>
    <property type="project" value="UniProtKB-UniRule"/>
</dbReference>
<dbReference type="GO" id="GO:0043716">
    <property type="term" value="F:2-hydroxy-3-keto-5-methylthiopentenyl-1-phosphate phosphatase activity"/>
    <property type="evidence" value="ECO:0007669"/>
    <property type="project" value="UniProtKB-UniRule"/>
</dbReference>
<dbReference type="GO" id="GO:0043874">
    <property type="term" value="F:acireductone synthase activity"/>
    <property type="evidence" value="ECO:0007669"/>
    <property type="project" value="UniProtKB-EC"/>
</dbReference>
<dbReference type="GO" id="GO:0000287">
    <property type="term" value="F:magnesium ion binding"/>
    <property type="evidence" value="ECO:0007669"/>
    <property type="project" value="UniProtKB-UniRule"/>
</dbReference>
<dbReference type="GO" id="GO:0019509">
    <property type="term" value="P:L-methionine salvage from methylthioadenosine"/>
    <property type="evidence" value="ECO:0007669"/>
    <property type="project" value="UniProtKB-UniRule"/>
</dbReference>
<dbReference type="CDD" id="cd01629">
    <property type="entry name" value="HAD_EP"/>
    <property type="match status" value="1"/>
</dbReference>
<dbReference type="FunFam" id="1.10.720.60:FF:000003">
    <property type="entry name" value="Enolase-phosphatase E1"/>
    <property type="match status" value="1"/>
</dbReference>
<dbReference type="FunFam" id="3.40.50.1000:FF:000079">
    <property type="entry name" value="Enolase-phosphatase E1"/>
    <property type="match status" value="1"/>
</dbReference>
<dbReference type="Gene3D" id="1.10.720.60">
    <property type="match status" value="1"/>
</dbReference>
<dbReference type="Gene3D" id="3.40.50.1000">
    <property type="entry name" value="HAD superfamily/HAD-like"/>
    <property type="match status" value="1"/>
</dbReference>
<dbReference type="HAMAP" id="MF_01681">
    <property type="entry name" value="Salvage_MtnC"/>
    <property type="match status" value="1"/>
</dbReference>
<dbReference type="InterPro" id="IPR023943">
    <property type="entry name" value="Enolase-ppase_E1"/>
</dbReference>
<dbReference type="InterPro" id="IPR036412">
    <property type="entry name" value="HAD-like_sf"/>
</dbReference>
<dbReference type="InterPro" id="IPR006439">
    <property type="entry name" value="HAD-SF_hydro_IA"/>
</dbReference>
<dbReference type="InterPro" id="IPR023214">
    <property type="entry name" value="HAD_sf"/>
</dbReference>
<dbReference type="NCBIfam" id="TIGR01691">
    <property type="entry name" value="enolase-ppase"/>
    <property type="match status" value="1"/>
</dbReference>
<dbReference type="NCBIfam" id="TIGR01549">
    <property type="entry name" value="HAD-SF-IA-v1"/>
    <property type="match status" value="1"/>
</dbReference>
<dbReference type="PANTHER" id="PTHR20371">
    <property type="entry name" value="ENOLASE-PHOSPHATASE E1"/>
    <property type="match status" value="1"/>
</dbReference>
<dbReference type="PANTHER" id="PTHR20371:SF1">
    <property type="entry name" value="ENOLASE-PHOSPHATASE E1"/>
    <property type="match status" value="1"/>
</dbReference>
<dbReference type="Pfam" id="PF00702">
    <property type="entry name" value="Hydrolase"/>
    <property type="match status" value="1"/>
</dbReference>
<dbReference type="PRINTS" id="PR00413">
    <property type="entry name" value="HADHALOGNASE"/>
</dbReference>
<dbReference type="SFLD" id="SFLDG01133">
    <property type="entry name" value="C1.5.4:_Enolase-phosphatase_Li"/>
    <property type="match status" value="1"/>
</dbReference>
<dbReference type="SFLD" id="SFLDF00044">
    <property type="entry name" value="enolase-phosphatase"/>
    <property type="match status" value="1"/>
</dbReference>
<dbReference type="SUPFAM" id="SSF56784">
    <property type="entry name" value="HAD-like"/>
    <property type="match status" value="1"/>
</dbReference>
<gene>
    <name evidence="1" type="primary">mtnC</name>
    <name type="ordered locus">XCV1884</name>
</gene>
<protein>
    <recommendedName>
        <fullName evidence="1">Enolase-phosphatase E1</fullName>
        <ecNumber evidence="1">3.1.3.77</ecNumber>
    </recommendedName>
    <alternativeName>
        <fullName evidence="1">2,3-diketo-5-methylthio-1-phosphopentane phosphatase</fullName>
    </alternativeName>
</protein>
<evidence type="ECO:0000255" key="1">
    <source>
        <dbReference type="HAMAP-Rule" id="MF_01681"/>
    </source>
</evidence>